<sequence length="416" mass="45828">MSTPLQGIKVLDFTGVQSGPSCTQMLAWFGADVIKIERPGVGDVTRHQLRDIPDIDALYFTMLNSNKRSIELNTKTAEGKEVMEKLIREADILVENFHPGAIDHMGFTWEHIQEINPRLIFGSIKGFDECSPYVNVKAYENVAQAAGGAASTTGFWDGPPLVSAAALGDSNTGMHLLIGLLAALLHREKTGRGQRVTMSMQDAVLNLCRVKLRDQQRLDKLGYLEEYPQYPNGTFGDAVPRGGNAGGGGQPGWILKCKGWETDPNAYIYFTIQEQNWENTCKAIGKPEWITDPAYSTAHARQPHIFDIFAEIEKYTVTIDKHEAVAYLTQFDIPCAPVLSMKEISLDPSLRQSGSVVEVEQPLRGKYLTVGCPMKFSAFTPDIKAAPLLGEHTAAVLQELGYSDDEIAAMKQNHAI</sequence>
<reference key="1">
    <citation type="journal article" date="2006" name="BMC Genomics">
        <title>Complete genome sequence of Shigella flexneri 5b and comparison with Shigella flexneri 2a.</title>
        <authorList>
            <person name="Nie H."/>
            <person name="Yang F."/>
            <person name="Zhang X."/>
            <person name="Yang J."/>
            <person name="Chen L."/>
            <person name="Wang J."/>
            <person name="Xiong Z."/>
            <person name="Peng J."/>
            <person name="Sun L."/>
            <person name="Dong J."/>
            <person name="Xue Y."/>
            <person name="Xu X."/>
            <person name="Chen S."/>
            <person name="Yao Z."/>
            <person name="Shen Y."/>
            <person name="Jin Q."/>
        </authorList>
    </citation>
    <scope>NUCLEOTIDE SEQUENCE [LARGE SCALE GENOMIC DNA]</scope>
    <source>
        <strain>8401</strain>
    </source>
</reference>
<keyword id="KW-0808">Transferase</keyword>
<protein>
    <recommendedName>
        <fullName>Formyl-CoA:oxalate CoA-transferase</fullName>
        <shortName>FCOCT</shortName>
        <ecNumber evidence="2">2.8.3.16</ecNumber>
    </recommendedName>
    <alternativeName>
        <fullName evidence="2">Formyl-coenzyme A transferase</fullName>
        <shortName evidence="2">Formyl-CoA transferase</shortName>
    </alternativeName>
</protein>
<accession>Q0T2C3</accession>
<organism>
    <name type="scientific">Shigella flexneri serotype 5b (strain 8401)</name>
    <dbReference type="NCBI Taxonomy" id="373384"/>
    <lineage>
        <taxon>Bacteria</taxon>
        <taxon>Pseudomonadati</taxon>
        <taxon>Pseudomonadota</taxon>
        <taxon>Gammaproteobacteria</taxon>
        <taxon>Enterobacterales</taxon>
        <taxon>Enterobacteriaceae</taxon>
        <taxon>Shigella</taxon>
    </lineage>
</organism>
<gene>
    <name evidence="2" type="primary">frc</name>
    <name type="ordered locus">SFV_2433</name>
</gene>
<evidence type="ECO:0000250" key="1"/>
<evidence type="ECO:0000255" key="2">
    <source>
        <dbReference type="HAMAP-Rule" id="MF_00742"/>
    </source>
</evidence>
<proteinExistence type="inferred from homology"/>
<name>FCTA_SHIF8</name>
<dbReference type="EC" id="2.8.3.16" evidence="2"/>
<dbReference type="EMBL" id="CP000266">
    <property type="protein sequence ID" value="ABF04542.1"/>
    <property type="molecule type" value="Genomic_DNA"/>
</dbReference>
<dbReference type="RefSeq" id="WP_000106759.1">
    <property type="nucleotide sequence ID" value="NC_008258.1"/>
</dbReference>
<dbReference type="SMR" id="Q0T2C3"/>
<dbReference type="GeneID" id="75202557"/>
<dbReference type="KEGG" id="sfv:SFV_2433"/>
<dbReference type="HOGENOM" id="CLU_033975_2_1_6"/>
<dbReference type="UniPathway" id="UPA00540">
    <property type="reaction ID" value="UER00598"/>
</dbReference>
<dbReference type="Proteomes" id="UP000000659">
    <property type="component" value="Chromosome"/>
</dbReference>
<dbReference type="GO" id="GO:0033608">
    <property type="term" value="F:formyl-CoA transferase activity"/>
    <property type="evidence" value="ECO:0007669"/>
    <property type="project" value="UniProtKB-EC"/>
</dbReference>
<dbReference type="GO" id="GO:0033611">
    <property type="term" value="P:oxalate catabolic process"/>
    <property type="evidence" value="ECO:0007669"/>
    <property type="project" value="UniProtKB-UniRule"/>
</dbReference>
<dbReference type="Gene3D" id="3.40.50.10540">
    <property type="entry name" value="Crotonobetainyl-coa:carnitine coa-transferase, domain 1"/>
    <property type="match status" value="1"/>
</dbReference>
<dbReference type="Gene3D" id="3.30.1540.10">
    <property type="entry name" value="formyl-coa transferase, domain 3"/>
    <property type="match status" value="1"/>
</dbReference>
<dbReference type="HAMAP" id="MF_00742">
    <property type="entry name" value="Formyl_CoA_transfer"/>
    <property type="match status" value="1"/>
</dbReference>
<dbReference type="InterPro" id="IPR050483">
    <property type="entry name" value="CoA-transferase_III_domain"/>
</dbReference>
<dbReference type="InterPro" id="IPR003673">
    <property type="entry name" value="CoA-Trfase_fam_III"/>
</dbReference>
<dbReference type="InterPro" id="IPR044855">
    <property type="entry name" value="CoA-Trfase_III_dom3_sf"/>
</dbReference>
<dbReference type="InterPro" id="IPR023606">
    <property type="entry name" value="CoA-Trfase_III_dom_1_sf"/>
</dbReference>
<dbReference type="InterPro" id="IPR017659">
    <property type="entry name" value="Formyl_CoA_transfer"/>
</dbReference>
<dbReference type="NCBIfam" id="TIGR03253">
    <property type="entry name" value="oxalate_frc"/>
    <property type="match status" value="1"/>
</dbReference>
<dbReference type="NCBIfam" id="NF003809">
    <property type="entry name" value="PRK05398.1"/>
    <property type="match status" value="1"/>
</dbReference>
<dbReference type="PANTHER" id="PTHR48207">
    <property type="entry name" value="SUCCINATE--HYDROXYMETHYLGLUTARATE COA-TRANSFERASE"/>
    <property type="match status" value="1"/>
</dbReference>
<dbReference type="PANTHER" id="PTHR48207:SF3">
    <property type="entry name" value="SUCCINATE--HYDROXYMETHYLGLUTARATE COA-TRANSFERASE"/>
    <property type="match status" value="1"/>
</dbReference>
<dbReference type="Pfam" id="PF02515">
    <property type="entry name" value="CoA_transf_3"/>
    <property type="match status" value="1"/>
</dbReference>
<dbReference type="SUPFAM" id="SSF89796">
    <property type="entry name" value="CoA-transferase family III (CaiB/BaiF)"/>
    <property type="match status" value="1"/>
</dbReference>
<feature type="chain" id="PRO_0000300996" description="Formyl-CoA:oxalate CoA-transferase">
    <location>
        <begin position="1"/>
        <end position="416"/>
    </location>
</feature>
<feature type="active site" description="Nucleophile" evidence="2">
    <location>
        <position position="169"/>
    </location>
</feature>
<feature type="binding site" evidence="1">
    <location>
        <begin position="17"/>
        <end position="18"/>
    </location>
    <ligand>
        <name>CoA</name>
        <dbReference type="ChEBI" id="CHEBI:57287"/>
    </ligand>
</feature>
<feature type="binding site" evidence="2">
    <location>
        <position position="38"/>
    </location>
    <ligand>
        <name>CoA</name>
        <dbReference type="ChEBI" id="CHEBI:57287"/>
    </ligand>
</feature>
<feature type="binding site" evidence="1">
    <location>
        <begin position="72"/>
        <end position="75"/>
    </location>
    <ligand>
        <name>CoA</name>
        <dbReference type="ChEBI" id="CHEBI:57287"/>
    </ligand>
</feature>
<feature type="binding site" evidence="1">
    <location>
        <begin position="96"/>
        <end position="98"/>
    </location>
    <ligand>
        <name>CoA</name>
        <dbReference type="ChEBI" id="CHEBI:57287"/>
    </ligand>
</feature>
<feature type="binding site" evidence="2">
    <location>
        <position position="104"/>
    </location>
    <ligand>
        <name>CoA</name>
        <dbReference type="ChEBI" id="CHEBI:57287"/>
    </ligand>
</feature>
<feature type="binding site" evidence="1">
    <location>
        <begin position="137"/>
        <end position="140"/>
    </location>
    <ligand>
        <name>CoA</name>
        <dbReference type="ChEBI" id="CHEBI:57287"/>
    </ligand>
</feature>
<feature type="binding site" evidence="1">
    <location>
        <begin position="248"/>
        <end position="250"/>
    </location>
    <ligand>
        <name>substrate</name>
    </ligand>
</feature>
<feature type="binding site" evidence="1">
    <location>
        <begin position="273"/>
        <end position="275"/>
    </location>
    <ligand>
        <name>CoA</name>
        <dbReference type="ChEBI" id="CHEBI:57287"/>
    </ligand>
</feature>
<comment type="function">
    <text evidence="1">Involved in the catabolism of oxalate and in the adapatation to low pH via the induction of the oxalate-dependent acid tolerance response (ATR). Catalyzes the transfer of the CoA moiety from formyl-CoA to oxalate (By similarity).</text>
</comment>
<comment type="catalytic activity">
    <reaction evidence="2">
        <text>formyl-CoA + oxalate = oxalyl-CoA + formate</text>
        <dbReference type="Rhea" id="RHEA:16545"/>
        <dbReference type="ChEBI" id="CHEBI:15740"/>
        <dbReference type="ChEBI" id="CHEBI:30623"/>
        <dbReference type="ChEBI" id="CHEBI:57376"/>
        <dbReference type="ChEBI" id="CHEBI:57388"/>
        <dbReference type="EC" id="2.8.3.16"/>
    </reaction>
</comment>
<comment type="pathway">
    <text evidence="2">Metabolic intermediate degradation; oxalate degradation; CO(2) and formate from oxalate: step 1/2.</text>
</comment>
<comment type="subunit">
    <text evidence="2">Homodimer.</text>
</comment>
<comment type="similarity">
    <text evidence="2">Belongs to the CoA-transferase III family. Frc subfamily.</text>
</comment>